<comment type="function">
    <text evidence="2">Mediates the side-chain deamidation of N-terminal glutamine residues to glutamate, an important step in N-end rule pathway of protein degradation. Conversion of the resulting N-terminal glutamine to glutamate renders the protein susceptible to arginylation, polyubiquitination and degradation as specified by the N-end rule. Does not act on substrates with internal or C-terminal glutamine and does not act on non-glutamine residues in any position.</text>
</comment>
<comment type="catalytic activity">
    <reaction evidence="2">
        <text>N-terminal L-glutaminyl-[protein] + H2O = N-terminal L-glutamyl-[protein] + NH4(+)</text>
        <dbReference type="Rhea" id="RHEA:50680"/>
        <dbReference type="Rhea" id="RHEA-COMP:12668"/>
        <dbReference type="Rhea" id="RHEA-COMP:12777"/>
        <dbReference type="ChEBI" id="CHEBI:15377"/>
        <dbReference type="ChEBI" id="CHEBI:28938"/>
        <dbReference type="ChEBI" id="CHEBI:64721"/>
        <dbReference type="ChEBI" id="CHEBI:64722"/>
        <dbReference type="EC" id="3.5.1.122"/>
    </reaction>
</comment>
<comment type="subunit">
    <text evidence="3">Monomer.</text>
</comment>
<comment type="similarity">
    <text evidence="4">Belongs to the NTAQ1 family.</text>
</comment>
<name>NTAQ1_DROSE</name>
<gene>
    <name type="primary">tun</name>
    <name type="ORF">GM21641</name>
</gene>
<keyword id="KW-0378">Hydrolase</keyword>
<keyword id="KW-1185">Reference proteome</keyword>
<proteinExistence type="inferred from homology"/>
<organism>
    <name type="scientific">Drosophila sechellia</name>
    <name type="common">Fruit fly</name>
    <dbReference type="NCBI Taxonomy" id="7238"/>
    <lineage>
        <taxon>Eukaryota</taxon>
        <taxon>Metazoa</taxon>
        <taxon>Ecdysozoa</taxon>
        <taxon>Arthropoda</taxon>
        <taxon>Hexapoda</taxon>
        <taxon>Insecta</taxon>
        <taxon>Pterygota</taxon>
        <taxon>Neoptera</taxon>
        <taxon>Endopterygota</taxon>
        <taxon>Diptera</taxon>
        <taxon>Brachycera</taxon>
        <taxon>Muscomorpha</taxon>
        <taxon>Ephydroidea</taxon>
        <taxon>Drosophilidae</taxon>
        <taxon>Drosophila</taxon>
        <taxon>Sophophora</taxon>
    </lineage>
</organism>
<feature type="chain" id="PRO_0000381829" description="Protein N-terminal glutamine amidohydrolase">
    <location>
        <begin position="1"/>
        <end position="205"/>
    </location>
</feature>
<feature type="active site" evidence="1">
    <location>
        <position position="20"/>
    </location>
</feature>
<feature type="active site" evidence="1">
    <location>
        <position position="74"/>
    </location>
</feature>
<feature type="active site" evidence="1">
    <location>
        <position position="90"/>
    </location>
</feature>
<protein>
    <recommendedName>
        <fullName>Protein N-terminal glutamine amidohydrolase</fullName>
        <ecNumber evidence="2">3.5.1.122</ecNumber>
    </recommendedName>
    <alternativeName>
        <fullName>Protein NH2-terminal glutamine deamidase</fullName>
        <shortName>N-terminal Gln amidase</shortName>
        <shortName>Nt(Q)-amidase</shortName>
    </alternativeName>
    <alternativeName>
        <fullName>Protein tungus</fullName>
    </alternativeName>
</protein>
<sequence length="205" mass="23974">MTTDFLFPKIADCSYVSCYCEENVWKLCEQVKRTRPEELSKCYAVFVSNEGRTVPLWRQKAGRGDDQVVIWDYHVFFIHNPLLNRCLVFDLDTTLPFPTYFHKYVTETFRSDLALRPEHHRFFRVIPADTYLIEFSSDRRHMRRPDGSWIKPPPSYPPILSNSNMHCLGDFICMSAGKGPGAVYSLSEFVQNFYKSPHVMAQNNK</sequence>
<reference key="1">
    <citation type="journal article" date="2007" name="Nature">
        <title>Evolution of genes and genomes on the Drosophila phylogeny.</title>
        <authorList>
            <consortium name="Drosophila 12 genomes consortium"/>
        </authorList>
    </citation>
    <scope>NUCLEOTIDE SEQUENCE [LARGE SCALE GENOMIC DNA]</scope>
    <source>
        <strain>Rob3c / Tucson 14021-0248.25</strain>
    </source>
</reference>
<evidence type="ECO:0000250" key="1"/>
<evidence type="ECO:0000250" key="2">
    <source>
        <dbReference type="UniProtKB" id="Q80WB5"/>
    </source>
</evidence>
<evidence type="ECO:0000250" key="3">
    <source>
        <dbReference type="UniProtKB" id="Q96HA8"/>
    </source>
</evidence>
<evidence type="ECO:0000305" key="4"/>
<accession>B4HSF8</accession>
<dbReference type="EC" id="3.5.1.122" evidence="2"/>
<dbReference type="EMBL" id="CH480816">
    <property type="protein sequence ID" value="EDW48036.1"/>
    <property type="molecule type" value="Genomic_DNA"/>
</dbReference>
<dbReference type="SMR" id="B4HSF8"/>
<dbReference type="STRING" id="7238.B4HSF8"/>
<dbReference type="EnsemblMetazoa" id="FBtr0204626">
    <property type="protein sequence ID" value="FBpp0203118"/>
    <property type="gene ID" value="FBgn0176521"/>
</dbReference>
<dbReference type="EnsemblMetazoa" id="XM_002033987.2">
    <property type="protein sequence ID" value="XP_002034023.1"/>
    <property type="gene ID" value="LOC6609334"/>
</dbReference>
<dbReference type="GeneID" id="6609334"/>
<dbReference type="KEGG" id="dse:6609334"/>
<dbReference type="CTD" id="36743"/>
<dbReference type="HOGENOM" id="CLU_091083_1_0_1"/>
<dbReference type="OMA" id="GWGTVYS"/>
<dbReference type="OrthoDB" id="80at7215"/>
<dbReference type="PhylomeDB" id="B4HSF8"/>
<dbReference type="ChiTaRS" id="Zasp52">
    <property type="organism name" value="fly"/>
</dbReference>
<dbReference type="Proteomes" id="UP000001292">
    <property type="component" value="Unassembled WGS sequence"/>
</dbReference>
<dbReference type="GO" id="GO:0005829">
    <property type="term" value="C:cytosol"/>
    <property type="evidence" value="ECO:0007669"/>
    <property type="project" value="TreeGrafter"/>
</dbReference>
<dbReference type="GO" id="GO:0005634">
    <property type="term" value="C:nucleus"/>
    <property type="evidence" value="ECO:0007669"/>
    <property type="project" value="TreeGrafter"/>
</dbReference>
<dbReference type="GO" id="GO:0008418">
    <property type="term" value="F:protein-N-terminal asparagine amidohydrolase activity"/>
    <property type="evidence" value="ECO:0007669"/>
    <property type="project" value="InterPro"/>
</dbReference>
<dbReference type="GO" id="GO:0070773">
    <property type="term" value="F:protein-N-terminal glutamine amidohydrolase activity"/>
    <property type="evidence" value="ECO:0007669"/>
    <property type="project" value="UniProtKB-EC"/>
</dbReference>
<dbReference type="FunFam" id="3.10.620.10:FF:000001">
    <property type="entry name" value="Blast:Protein N-terminal glutamine amidohydrolase"/>
    <property type="match status" value="1"/>
</dbReference>
<dbReference type="Gene3D" id="3.10.620.10">
    <property type="entry name" value="Protein N-terminal glutamine amidohydrolase, alpha beta roll"/>
    <property type="match status" value="1"/>
</dbReference>
<dbReference type="InterPro" id="IPR037132">
    <property type="entry name" value="N_Gln_amidohydro_ab_roll_sf"/>
</dbReference>
<dbReference type="InterPro" id="IPR039733">
    <property type="entry name" value="NTAQ1"/>
</dbReference>
<dbReference type="InterPro" id="IPR023128">
    <property type="entry name" value="Prot_N_Gln_amidohydro_ab_roll"/>
</dbReference>
<dbReference type="PANTHER" id="PTHR13035">
    <property type="entry name" value="PROTEIN N-TERMINAL GLUTAMINE AMIDOHYDROLASE"/>
    <property type="match status" value="1"/>
</dbReference>
<dbReference type="PANTHER" id="PTHR13035:SF0">
    <property type="entry name" value="PROTEIN N-TERMINAL GLUTAMINE AMIDOHYDROLASE"/>
    <property type="match status" value="1"/>
</dbReference>
<dbReference type="Pfam" id="PF09764">
    <property type="entry name" value="Nt_Gln_amidase"/>
    <property type="match status" value="1"/>
</dbReference>